<accession>B2TTV5</accession>
<sequence length="198" mass="22836">MAEKQTAKRNRREEILQSLALMLESSDGSQRITTAKLAASVGVSEAALYRHFPSKTRMFDSLIEFIEDSLITRINLILKDEKDTTARLRLIVLLLLGFGERNPGLTRILTGHALMFEQDRLQGRINQLFERIEAQLRQVLREKRMREGEGYTTDETLLASQILAFCEGMLSRFVRSEFKYRPTDDFDARWPLIAAQLQ</sequence>
<protein>
    <recommendedName>
        <fullName evidence="1">Nucleoid occlusion factor SlmA</fullName>
    </recommendedName>
</protein>
<reference key="1">
    <citation type="submission" date="2008-05" db="EMBL/GenBank/DDBJ databases">
        <title>Complete sequence of Shigella boydii serotype 18 strain BS512.</title>
        <authorList>
            <person name="Rasko D.A."/>
            <person name="Rosovitz M."/>
            <person name="Maurelli A.T."/>
            <person name="Myers G."/>
            <person name="Seshadri R."/>
            <person name="Cer R."/>
            <person name="Jiang L."/>
            <person name="Ravel J."/>
            <person name="Sebastian Y."/>
        </authorList>
    </citation>
    <scope>NUCLEOTIDE SEQUENCE [LARGE SCALE GENOMIC DNA]</scope>
    <source>
        <strain>CDC 3083-94 / BS512</strain>
    </source>
</reference>
<name>SLMA_SHIB3</name>
<organism>
    <name type="scientific">Shigella boydii serotype 18 (strain CDC 3083-94 / BS512)</name>
    <dbReference type="NCBI Taxonomy" id="344609"/>
    <lineage>
        <taxon>Bacteria</taxon>
        <taxon>Pseudomonadati</taxon>
        <taxon>Pseudomonadota</taxon>
        <taxon>Gammaproteobacteria</taxon>
        <taxon>Enterobacterales</taxon>
        <taxon>Enterobacteriaceae</taxon>
        <taxon>Shigella</taxon>
    </lineage>
</organism>
<comment type="function">
    <text evidence="1">Required for nucleoid occlusion (NO) phenomenon, which prevents Z-ring formation and cell division over the nucleoid. Acts as a DNA-associated cell division inhibitor that binds simultaneously chromosomal DNA and FtsZ, and disrupts the assembly of FtsZ polymers. SlmA-DNA-binding sequences (SBS) are dispersed on non-Ter regions of the chromosome, preventing FtsZ polymerization at these regions.</text>
</comment>
<comment type="subunit">
    <text evidence="1">Homodimer. Interacts with FtsZ.</text>
</comment>
<comment type="subcellular location">
    <subcellularLocation>
        <location evidence="1">Cytoplasm</location>
        <location evidence="1">Nucleoid</location>
    </subcellularLocation>
</comment>
<comment type="similarity">
    <text evidence="1">Belongs to the nucleoid occlusion factor SlmA family.</text>
</comment>
<evidence type="ECO:0000255" key="1">
    <source>
        <dbReference type="HAMAP-Rule" id="MF_01839"/>
    </source>
</evidence>
<proteinExistence type="inferred from homology"/>
<dbReference type="EMBL" id="CP001063">
    <property type="protein sequence ID" value="ACD07281.1"/>
    <property type="molecule type" value="Genomic_DNA"/>
</dbReference>
<dbReference type="RefSeq" id="WP_000818601.1">
    <property type="nucleotide sequence ID" value="NC_010658.1"/>
</dbReference>
<dbReference type="SMR" id="B2TTV5"/>
<dbReference type="STRING" id="344609.SbBS512_E4066"/>
<dbReference type="GeneID" id="93778356"/>
<dbReference type="KEGG" id="sbc:SbBS512_E4066"/>
<dbReference type="HOGENOM" id="CLU_069356_5_0_6"/>
<dbReference type="Proteomes" id="UP000001030">
    <property type="component" value="Chromosome"/>
</dbReference>
<dbReference type="GO" id="GO:0043590">
    <property type="term" value="C:bacterial nucleoid"/>
    <property type="evidence" value="ECO:0007669"/>
    <property type="project" value="UniProtKB-UniRule"/>
</dbReference>
<dbReference type="GO" id="GO:0005737">
    <property type="term" value="C:cytoplasm"/>
    <property type="evidence" value="ECO:0007669"/>
    <property type="project" value="UniProtKB-UniRule"/>
</dbReference>
<dbReference type="GO" id="GO:0003700">
    <property type="term" value="F:DNA-binding transcription factor activity"/>
    <property type="evidence" value="ECO:0007669"/>
    <property type="project" value="TreeGrafter"/>
</dbReference>
<dbReference type="GO" id="GO:0000976">
    <property type="term" value="F:transcription cis-regulatory region binding"/>
    <property type="evidence" value="ECO:0007669"/>
    <property type="project" value="TreeGrafter"/>
</dbReference>
<dbReference type="GO" id="GO:0051301">
    <property type="term" value="P:cell division"/>
    <property type="evidence" value="ECO:0007669"/>
    <property type="project" value="UniProtKB-KW"/>
</dbReference>
<dbReference type="GO" id="GO:0010974">
    <property type="term" value="P:negative regulation of division septum assembly"/>
    <property type="evidence" value="ECO:0007669"/>
    <property type="project" value="InterPro"/>
</dbReference>
<dbReference type="FunFam" id="1.10.357.10:FF:000002">
    <property type="entry name" value="Nucleoid occlusion factor SlmA"/>
    <property type="match status" value="1"/>
</dbReference>
<dbReference type="Gene3D" id="1.10.357.10">
    <property type="entry name" value="Tetracycline Repressor, domain 2"/>
    <property type="match status" value="1"/>
</dbReference>
<dbReference type="HAMAP" id="MF_01839">
    <property type="entry name" value="NO_factor_SlmA"/>
    <property type="match status" value="1"/>
</dbReference>
<dbReference type="InterPro" id="IPR023772">
    <property type="entry name" value="DNA-bd_HTH_TetR-type_CS"/>
</dbReference>
<dbReference type="InterPro" id="IPR009057">
    <property type="entry name" value="Homeodomain-like_sf"/>
</dbReference>
<dbReference type="InterPro" id="IPR050109">
    <property type="entry name" value="HTH-type_TetR-like_transc_reg"/>
</dbReference>
<dbReference type="InterPro" id="IPR001647">
    <property type="entry name" value="HTH_TetR"/>
</dbReference>
<dbReference type="InterPro" id="IPR023769">
    <property type="entry name" value="NO_SlmA"/>
</dbReference>
<dbReference type="InterPro" id="IPR054580">
    <property type="entry name" value="SlmA-like_C"/>
</dbReference>
<dbReference type="InterPro" id="IPR036271">
    <property type="entry name" value="Tet_transcr_reg_TetR-rel_C_sf"/>
</dbReference>
<dbReference type="NCBIfam" id="NF007015">
    <property type="entry name" value="PRK09480.1"/>
    <property type="match status" value="1"/>
</dbReference>
<dbReference type="PANTHER" id="PTHR30055">
    <property type="entry name" value="HTH-TYPE TRANSCRIPTIONAL REGULATOR RUTR"/>
    <property type="match status" value="1"/>
</dbReference>
<dbReference type="PANTHER" id="PTHR30055:SF183">
    <property type="entry name" value="NUCLEOID OCCLUSION FACTOR SLMA"/>
    <property type="match status" value="1"/>
</dbReference>
<dbReference type="Pfam" id="PF22276">
    <property type="entry name" value="SlmA-like_C"/>
    <property type="match status" value="1"/>
</dbReference>
<dbReference type="Pfam" id="PF00440">
    <property type="entry name" value="TetR_N"/>
    <property type="match status" value="1"/>
</dbReference>
<dbReference type="SUPFAM" id="SSF46689">
    <property type="entry name" value="Homeodomain-like"/>
    <property type="match status" value="1"/>
</dbReference>
<dbReference type="SUPFAM" id="SSF48498">
    <property type="entry name" value="Tetracyclin repressor-like, C-terminal domain"/>
    <property type="match status" value="1"/>
</dbReference>
<dbReference type="PROSITE" id="PS01081">
    <property type="entry name" value="HTH_TETR_1"/>
    <property type="match status" value="1"/>
</dbReference>
<dbReference type="PROSITE" id="PS50977">
    <property type="entry name" value="HTH_TETR_2"/>
    <property type="match status" value="1"/>
</dbReference>
<gene>
    <name evidence="1" type="primary">slmA</name>
    <name type="ordered locus">SbBS512_E4066</name>
</gene>
<feature type="chain" id="PRO_1000188405" description="Nucleoid occlusion factor SlmA">
    <location>
        <begin position="1"/>
        <end position="198"/>
    </location>
</feature>
<feature type="domain" description="HTH tetR-type" evidence="1">
    <location>
        <begin position="10"/>
        <end position="70"/>
    </location>
</feature>
<feature type="DNA-binding region" description="H-T-H motif" evidence="1">
    <location>
        <begin position="33"/>
        <end position="52"/>
    </location>
</feature>
<feature type="coiled-coil region" evidence="1">
    <location>
        <begin position="117"/>
        <end position="144"/>
    </location>
</feature>
<keyword id="KW-0131">Cell cycle</keyword>
<keyword id="KW-0132">Cell division</keyword>
<keyword id="KW-0175">Coiled coil</keyword>
<keyword id="KW-0963">Cytoplasm</keyword>
<keyword id="KW-0238">DNA-binding</keyword>
<keyword id="KW-1185">Reference proteome</keyword>